<keyword id="KW-0050">Antiport</keyword>
<keyword id="KW-1003">Cell membrane</keyword>
<keyword id="KW-0406">Ion transport</keyword>
<keyword id="KW-0472">Membrane</keyword>
<keyword id="KW-0812">Transmembrane</keyword>
<keyword id="KW-1133">Transmembrane helix</keyword>
<keyword id="KW-0813">Transport</keyword>
<reference key="1">
    <citation type="journal article" date="2007" name="PLoS ONE">
        <title>Molecular correlates of host specialization in Staphylococcus aureus.</title>
        <authorList>
            <person name="Herron-Olson L."/>
            <person name="Fitzgerald J.R."/>
            <person name="Musser J.M."/>
            <person name="Kapur V."/>
        </authorList>
    </citation>
    <scope>NUCLEOTIDE SEQUENCE [LARGE SCALE GENOMIC DNA]</scope>
    <source>
        <strain>bovine RF122 / ET3-1</strain>
    </source>
</reference>
<accession>Q2YSV6</accession>
<dbReference type="EMBL" id="AJ938182">
    <property type="protein sequence ID" value="CAI80262.1"/>
    <property type="molecule type" value="Genomic_DNA"/>
</dbReference>
<dbReference type="RefSeq" id="WP_000661906.1">
    <property type="nucleotide sequence ID" value="NC_007622.1"/>
</dbReference>
<dbReference type="SMR" id="Q2YSV6"/>
<dbReference type="KEGG" id="sab:SAB0574"/>
<dbReference type="HOGENOM" id="CLU_101659_1_1_9"/>
<dbReference type="GO" id="GO:0005886">
    <property type="term" value="C:plasma membrane"/>
    <property type="evidence" value="ECO:0007669"/>
    <property type="project" value="UniProtKB-SubCell"/>
</dbReference>
<dbReference type="GO" id="GO:0015297">
    <property type="term" value="F:antiporter activity"/>
    <property type="evidence" value="ECO:0007669"/>
    <property type="project" value="UniProtKB-KW"/>
</dbReference>
<dbReference type="GO" id="GO:0006811">
    <property type="term" value="P:monoatomic ion transport"/>
    <property type="evidence" value="ECO:0007669"/>
    <property type="project" value="UniProtKB-KW"/>
</dbReference>
<dbReference type="InterPro" id="IPR050622">
    <property type="entry name" value="CPA3_antiporter_subunitB"/>
</dbReference>
<dbReference type="InterPro" id="IPR007182">
    <property type="entry name" value="MnhB"/>
</dbReference>
<dbReference type="NCBIfam" id="NF009223">
    <property type="entry name" value="PRK12573.1"/>
    <property type="match status" value="1"/>
</dbReference>
<dbReference type="NCBIfam" id="NF009224">
    <property type="entry name" value="PRK12574.1"/>
    <property type="match status" value="1"/>
</dbReference>
<dbReference type="PANTHER" id="PTHR33932">
    <property type="entry name" value="NA(+)/H(+) ANTIPORTER SUBUNIT B"/>
    <property type="match status" value="1"/>
</dbReference>
<dbReference type="PANTHER" id="PTHR33932:SF4">
    <property type="entry name" value="NA(+)_H(+) ANTIPORTER SUBUNIT B"/>
    <property type="match status" value="1"/>
</dbReference>
<dbReference type="Pfam" id="PF04039">
    <property type="entry name" value="MnhB"/>
    <property type="match status" value="1"/>
</dbReference>
<evidence type="ECO:0000250" key="1"/>
<evidence type="ECO:0000255" key="2"/>
<evidence type="ECO:0000305" key="3"/>
<gene>
    <name type="primary">mnhB2</name>
    <name type="synonym">mrpB2</name>
    <name type="ordered locus">SAB0574</name>
</gene>
<sequence>MKENDVVLRTVTKLVVFILLTFGFYVFFAGHNNPGGGFIGGLIFSSAFILMFLAFNVEEVLESLPIDFRILMIIGALVSSITAIIPMFFGKPFLSQYETTWILPILGQIHVSTITLFELGILFSVVGVIVTVMLSLSGGRS</sequence>
<proteinExistence type="inferred from homology"/>
<name>MNHB2_STAAB</name>
<comment type="subunit">
    <text evidence="1">May form a heterooligomeric complex that consists of seven subunits: mnhA2, mnhB2, mnhC2, mnhD2, mnhE2, mnhF2 and mnhG2.</text>
</comment>
<comment type="subcellular location">
    <subcellularLocation>
        <location evidence="3">Cell membrane</location>
        <topology evidence="3">Multi-pass membrane protein</topology>
    </subcellularLocation>
</comment>
<comment type="similarity">
    <text evidence="3">Belongs to the CPA3 antiporters (TC 2.A.63) subunit B family.</text>
</comment>
<protein>
    <recommendedName>
        <fullName>Putative antiporter subunit mnhB2</fullName>
    </recommendedName>
    <alternativeName>
        <fullName>Mrp complex subunit B2</fullName>
    </alternativeName>
    <alternativeName>
        <fullName>Putative NADH-ubiquinone oxidoreductase subunit mnhB2</fullName>
    </alternativeName>
</protein>
<organism>
    <name type="scientific">Staphylococcus aureus (strain bovine RF122 / ET3-1)</name>
    <dbReference type="NCBI Taxonomy" id="273036"/>
    <lineage>
        <taxon>Bacteria</taxon>
        <taxon>Bacillati</taxon>
        <taxon>Bacillota</taxon>
        <taxon>Bacilli</taxon>
        <taxon>Bacillales</taxon>
        <taxon>Staphylococcaceae</taxon>
        <taxon>Staphylococcus</taxon>
    </lineage>
</organism>
<feature type="chain" id="PRO_0000372267" description="Putative antiporter subunit mnhB2">
    <location>
        <begin position="1"/>
        <end position="141"/>
    </location>
</feature>
<feature type="transmembrane region" description="Helical" evidence="2">
    <location>
        <begin position="10"/>
        <end position="30"/>
    </location>
</feature>
<feature type="transmembrane region" description="Helical" evidence="2">
    <location>
        <begin position="35"/>
        <end position="55"/>
    </location>
</feature>
<feature type="transmembrane region" description="Helical" evidence="2">
    <location>
        <begin position="70"/>
        <end position="90"/>
    </location>
</feature>
<feature type="transmembrane region" description="Helical" evidence="2">
    <location>
        <begin position="114"/>
        <end position="134"/>
    </location>
</feature>